<dbReference type="EMBL" id="CP001068">
    <property type="protein sequence ID" value="ACD28583.1"/>
    <property type="molecule type" value="Genomic_DNA"/>
</dbReference>
<dbReference type="SMR" id="B2UG56"/>
<dbReference type="STRING" id="402626.Rpic_3463"/>
<dbReference type="KEGG" id="rpi:Rpic_3463"/>
<dbReference type="eggNOG" id="COG0792">
    <property type="taxonomic scope" value="Bacteria"/>
</dbReference>
<dbReference type="HOGENOM" id="CLU_115353_1_0_4"/>
<dbReference type="GO" id="GO:0003676">
    <property type="term" value="F:nucleic acid binding"/>
    <property type="evidence" value="ECO:0007669"/>
    <property type="project" value="InterPro"/>
</dbReference>
<dbReference type="CDD" id="cd20736">
    <property type="entry name" value="PoNe_Nuclease"/>
    <property type="match status" value="1"/>
</dbReference>
<dbReference type="Gene3D" id="3.40.1350.10">
    <property type="match status" value="1"/>
</dbReference>
<dbReference type="HAMAP" id="MF_00048">
    <property type="entry name" value="UPF0102"/>
    <property type="match status" value="1"/>
</dbReference>
<dbReference type="InterPro" id="IPR011335">
    <property type="entry name" value="Restrct_endonuc-II-like"/>
</dbReference>
<dbReference type="InterPro" id="IPR011856">
    <property type="entry name" value="tRNA_endonuc-like_dom_sf"/>
</dbReference>
<dbReference type="InterPro" id="IPR003509">
    <property type="entry name" value="UPF0102_YraN-like"/>
</dbReference>
<dbReference type="NCBIfam" id="NF009150">
    <property type="entry name" value="PRK12497.1-3"/>
    <property type="match status" value="1"/>
</dbReference>
<dbReference type="NCBIfam" id="TIGR00252">
    <property type="entry name" value="YraN family protein"/>
    <property type="match status" value="1"/>
</dbReference>
<dbReference type="PANTHER" id="PTHR34039">
    <property type="entry name" value="UPF0102 PROTEIN YRAN"/>
    <property type="match status" value="1"/>
</dbReference>
<dbReference type="PANTHER" id="PTHR34039:SF1">
    <property type="entry name" value="UPF0102 PROTEIN YRAN"/>
    <property type="match status" value="1"/>
</dbReference>
<dbReference type="Pfam" id="PF02021">
    <property type="entry name" value="UPF0102"/>
    <property type="match status" value="1"/>
</dbReference>
<dbReference type="SUPFAM" id="SSF52980">
    <property type="entry name" value="Restriction endonuclease-like"/>
    <property type="match status" value="1"/>
</dbReference>
<reference key="1">
    <citation type="submission" date="2008-05" db="EMBL/GenBank/DDBJ databases">
        <title>Complete sequence of chromosome 1 of Ralstonia pickettii 12J.</title>
        <authorList>
            <person name="Lucas S."/>
            <person name="Copeland A."/>
            <person name="Lapidus A."/>
            <person name="Glavina del Rio T."/>
            <person name="Dalin E."/>
            <person name="Tice H."/>
            <person name="Bruce D."/>
            <person name="Goodwin L."/>
            <person name="Pitluck S."/>
            <person name="Meincke L."/>
            <person name="Brettin T."/>
            <person name="Detter J.C."/>
            <person name="Han C."/>
            <person name="Kuske C.R."/>
            <person name="Schmutz J."/>
            <person name="Larimer F."/>
            <person name="Land M."/>
            <person name="Hauser L."/>
            <person name="Kyrpides N."/>
            <person name="Mikhailova N."/>
            <person name="Marsh T."/>
            <person name="Richardson P."/>
        </authorList>
    </citation>
    <scope>NUCLEOTIDE SEQUENCE [LARGE SCALE GENOMIC DNA]</scope>
    <source>
        <strain>12J</strain>
    </source>
</reference>
<feature type="chain" id="PRO_1000091254" description="UPF0102 protein Rpic_3463">
    <location>
        <begin position="1"/>
        <end position="125"/>
    </location>
</feature>
<organism>
    <name type="scientific">Ralstonia pickettii (strain 12J)</name>
    <dbReference type="NCBI Taxonomy" id="402626"/>
    <lineage>
        <taxon>Bacteria</taxon>
        <taxon>Pseudomonadati</taxon>
        <taxon>Pseudomonadota</taxon>
        <taxon>Betaproteobacteria</taxon>
        <taxon>Burkholderiales</taxon>
        <taxon>Burkholderiaceae</taxon>
        <taxon>Ralstonia</taxon>
    </lineage>
</organism>
<gene>
    <name type="ordered locus">Rpic_3463</name>
</gene>
<name>Y3463_RALPJ</name>
<sequence>MHAPQPITAATGEAGEDRALRYLQARGLAVVSRNYRCKGGEIDLVMRDAAGALVFVEVRARVARSTQRFGGAAASVTPAKQRRLIAAAEDFLARQVEDVPACRFDVIAIDGARIEWMRDAFGVDA</sequence>
<proteinExistence type="inferred from homology"/>
<accession>B2UG56</accession>
<protein>
    <recommendedName>
        <fullName evidence="1">UPF0102 protein Rpic_3463</fullName>
    </recommendedName>
</protein>
<evidence type="ECO:0000255" key="1">
    <source>
        <dbReference type="HAMAP-Rule" id="MF_00048"/>
    </source>
</evidence>
<comment type="similarity">
    <text evidence="1">Belongs to the UPF0102 family.</text>
</comment>